<comment type="function">
    <text evidence="1">May control the interaction of photosystem II (PSII) cores with the light-harvesting antenna, regulates electron flow through the 2 photosystem reaction centers. PSII is a light-driven water plastoquinone oxidoreductase, using light energy to abstract electrons from H(2)O, generating a proton gradient subsequently used for ATP formation.</text>
</comment>
<comment type="subunit">
    <text evidence="1">PSII is composed of 1 copy each of membrane proteins PsbA, PsbB, PsbC, PsbD, PsbE, PsbF, PsbH, PsbI, PsbJ, PsbK, PsbL, PsbM, PsbT, PsbY, PsbZ, Psb30/Ycf12, at least 3 peripheral proteins of the oxygen-evolving complex and a large number of cofactors. It forms dimeric complexes.</text>
</comment>
<comment type="subcellular location">
    <subcellularLocation>
        <location evidence="1">Plastid</location>
        <location evidence="1">Chloroplast thylakoid membrane</location>
        <topology evidence="1">Multi-pass membrane protein</topology>
    </subcellularLocation>
</comment>
<comment type="similarity">
    <text evidence="1">Belongs to the PsbZ family.</text>
</comment>
<accession>Q5IHA8</accession>
<feature type="chain" id="PRO_0000217711" description="Photosystem II reaction center protein Z">
    <location>
        <begin position="1"/>
        <end position="62"/>
    </location>
</feature>
<feature type="transmembrane region" description="Helical" evidence="1">
    <location>
        <begin position="8"/>
        <end position="28"/>
    </location>
</feature>
<feature type="transmembrane region" description="Helical" evidence="1">
    <location>
        <begin position="41"/>
        <end position="61"/>
    </location>
</feature>
<gene>
    <name evidence="1" type="primary">psbZ</name>
</gene>
<organism>
    <name type="scientific">Magnolia tripetala</name>
    <name type="common">Umbrella-tree</name>
    <name type="synonym">Magnolia virginiana var. tripetala</name>
    <dbReference type="NCBI Taxonomy" id="44926"/>
    <lineage>
        <taxon>Eukaryota</taxon>
        <taxon>Viridiplantae</taxon>
        <taxon>Streptophyta</taxon>
        <taxon>Embryophyta</taxon>
        <taxon>Tracheophyta</taxon>
        <taxon>Spermatophyta</taxon>
        <taxon>Magnoliopsida</taxon>
        <taxon>Magnoliidae</taxon>
        <taxon>Magnoliales</taxon>
        <taxon>Magnoliaceae</taxon>
        <taxon>Magnolia</taxon>
    </lineage>
</organism>
<evidence type="ECO:0000255" key="1">
    <source>
        <dbReference type="HAMAP-Rule" id="MF_00644"/>
    </source>
</evidence>
<name>PSBZ_MAGTR</name>
<proteinExistence type="inferred from homology"/>
<protein>
    <recommendedName>
        <fullName evidence="1">Photosystem II reaction center protein Z</fullName>
        <shortName evidence="1">PSII-Z</shortName>
    </recommendedName>
</protein>
<dbReference type="EMBL" id="AY727486">
    <property type="protein sequence ID" value="AAW56535.1"/>
    <property type="molecule type" value="Genomic_DNA"/>
</dbReference>
<dbReference type="RefSeq" id="YP_009026878.1">
    <property type="nucleotide sequence ID" value="NC_024027.1"/>
</dbReference>
<dbReference type="SMR" id="Q5IHA8"/>
<dbReference type="GeneID" id="19019292"/>
<dbReference type="GO" id="GO:0009535">
    <property type="term" value="C:chloroplast thylakoid membrane"/>
    <property type="evidence" value="ECO:0007669"/>
    <property type="project" value="UniProtKB-SubCell"/>
</dbReference>
<dbReference type="GO" id="GO:0009539">
    <property type="term" value="C:photosystem II reaction center"/>
    <property type="evidence" value="ECO:0007669"/>
    <property type="project" value="InterPro"/>
</dbReference>
<dbReference type="GO" id="GO:0015979">
    <property type="term" value="P:photosynthesis"/>
    <property type="evidence" value="ECO:0007669"/>
    <property type="project" value="UniProtKB-UniRule"/>
</dbReference>
<dbReference type="GO" id="GO:0042549">
    <property type="term" value="P:photosystem II stabilization"/>
    <property type="evidence" value="ECO:0007669"/>
    <property type="project" value="InterPro"/>
</dbReference>
<dbReference type="FunFam" id="1.10.287.740:FF:000001">
    <property type="entry name" value="Photosystem II reaction center protein Z"/>
    <property type="match status" value="1"/>
</dbReference>
<dbReference type="Gene3D" id="1.10.287.740">
    <property type="entry name" value="Photosystem II PsbZ, reaction centre"/>
    <property type="match status" value="1"/>
</dbReference>
<dbReference type="HAMAP" id="MF_00644">
    <property type="entry name" value="PSII_PsbZ"/>
    <property type="match status" value="1"/>
</dbReference>
<dbReference type="InterPro" id="IPR002644">
    <property type="entry name" value="PSII_PsbZ"/>
</dbReference>
<dbReference type="InterPro" id="IPR036512">
    <property type="entry name" value="PSII_PsbZ_sf"/>
</dbReference>
<dbReference type="NCBIfam" id="TIGR03043">
    <property type="entry name" value="PS_II_psbZ"/>
    <property type="match status" value="1"/>
</dbReference>
<dbReference type="PANTHER" id="PTHR34971">
    <property type="entry name" value="PHOTOSYSTEM II REACTION CENTER PROTEIN Z"/>
    <property type="match status" value="1"/>
</dbReference>
<dbReference type="PANTHER" id="PTHR34971:SF2">
    <property type="entry name" value="PHOTOSYSTEM II REACTION CENTER PROTEIN Z"/>
    <property type="match status" value="1"/>
</dbReference>
<dbReference type="Pfam" id="PF01737">
    <property type="entry name" value="Ycf9"/>
    <property type="match status" value="1"/>
</dbReference>
<dbReference type="SUPFAM" id="SSF161055">
    <property type="entry name" value="PsbZ-like"/>
    <property type="match status" value="1"/>
</dbReference>
<reference key="1">
    <citation type="journal article" date="2005" name="Am. J. Bot.">
        <title>The tortoise and the hare II: relative utility of 21 noncoding chloroplast DNA sequences for phylogenetic analysis.</title>
        <authorList>
            <person name="Shaw J."/>
            <person name="Lickey E.B."/>
            <person name="Beck J.T."/>
            <person name="Farmer S.B."/>
            <person name="Liu W."/>
            <person name="Miller J."/>
            <person name="Siripun K.C."/>
            <person name="Winder C.T."/>
            <person name="Schilling E.E."/>
            <person name="Small R.L."/>
        </authorList>
        <dbReference type="AGRICOLA" id="IND43689705"/>
    </citation>
    <scope>NUCLEOTIDE SEQUENCE [GENOMIC DNA]</scope>
</reference>
<geneLocation type="chloroplast"/>
<keyword id="KW-0150">Chloroplast</keyword>
<keyword id="KW-0472">Membrane</keyword>
<keyword id="KW-0602">Photosynthesis</keyword>
<keyword id="KW-0604">Photosystem II</keyword>
<keyword id="KW-0934">Plastid</keyword>
<keyword id="KW-0674">Reaction center</keyword>
<keyword id="KW-0793">Thylakoid</keyword>
<keyword id="KW-0812">Transmembrane</keyword>
<keyword id="KW-1133">Transmembrane helix</keyword>
<sequence>MTIAFQLAVFALIATSSILLISVPVVFASSDGWSSNKNVVFSGTSLWIGLVFLVAILNSLIS</sequence>